<accession>O13786</accession>
<protein>
    <recommendedName>
        <fullName>Vacuolar segregation protein pep7</fullName>
    </recommendedName>
</protein>
<dbReference type="EMBL" id="CU329670">
    <property type="protein sequence ID" value="CAB16219.1"/>
    <property type="molecule type" value="Genomic_DNA"/>
</dbReference>
<dbReference type="PIR" id="T37840">
    <property type="entry name" value="T37840"/>
</dbReference>
<dbReference type="RefSeq" id="NP_594255.1">
    <property type="nucleotide sequence ID" value="NM_001019678.2"/>
</dbReference>
<dbReference type="SMR" id="O13786"/>
<dbReference type="BioGRID" id="278885">
    <property type="interactions" value="8"/>
</dbReference>
<dbReference type="FunCoup" id="O13786">
    <property type="interactions" value="81"/>
</dbReference>
<dbReference type="STRING" id="284812.O13786"/>
<dbReference type="iPTMnet" id="O13786"/>
<dbReference type="PaxDb" id="4896-SPAC17G6.08.1"/>
<dbReference type="EnsemblFungi" id="SPAC17G6.08.1">
    <property type="protein sequence ID" value="SPAC17G6.08.1:pep"/>
    <property type="gene ID" value="SPAC17G6.08"/>
</dbReference>
<dbReference type="GeneID" id="2542423"/>
<dbReference type="KEGG" id="spo:2542423"/>
<dbReference type="PomBase" id="SPAC17G6.08">
    <property type="gene designation" value="pep7"/>
</dbReference>
<dbReference type="VEuPathDB" id="FungiDB:SPAC17G6.08"/>
<dbReference type="eggNOG" id="KOG1842">
    <property type="taxonomic scope" value="Eukaryota"/>
</dbReference>
<dbReference type="HOGENOM" id="CLU_026440_1_0_1"/>
<dbReference type="InParanoid" id="O13786"/>
<dbReference type="OMA" id="DDVHQNL"/>
<dbReference type="PhylomeDB" id="O13786"/>
<dbReference type="Reactome" id="R-SPO-983231">
    <property type="pathway name" value="Factors involved in megakaryocyte development and platelet production"/>
</dbReference>
<dbReference type="PRO" id="PR:O13786"/>
<dbReference type="Proteomes" id="UP000002485">
    <property type="component" value="Chromosome I"/>
</dbReference>
<dbReference type="GO" id="GO:0005737">
    <property type="term" value="C:cytoplasm"/>
    <property type="evidence" value="ECO:0007005"/>
    <property type="project" value="PomBase"/>
</dbReference>
<dbReference type="GO" id="GO:0010009">
    <property type="term" value="C:cytoplasmic side of endosome membrane"/>
    <property type="evidence" value="ECO:0000266"/>
    <property type="project" value="PomBase"/>
</dbReference>
<dbReference type="GO" id="GO:0005794">
    <property type="term" value="C:Golgi apparatus"/>
    <property type="evidence" value="ECO:0007005"/>
    <property type="project" value="PomBase"/>
</dbReference>
<dbReference type="GO" id="GO:0032266">
    <property type="term" value="F:phosphatidylinositol-3-phosphate binding"/>
    <property type="evidence" value="ECO:0000266"/>
    <property type="project" value="PomBase"/>
</dbReference>
<dbReference type="GO" id="GO:0008270">
    <property type="term" value="F:zinc ion binding"/>
    <property type="evidence" value="ECO:0007669"/>
    <property type="project" value="UniProtKB-KW"/>
</dbReference>
<dbReference type="GO" id="GO:0006896">
    <property type="term" value="P:Golgi to vacuole transport"/>
    <property type="evidence" value="ECO:0000266"/>
    <property type="project" value="PomBase"/>
</dbReference>
<dbReference type="GO" id="GO:0006904">
    <property type="term" value="P:vesicle docking involved in exocytosis"/>
    <property type="evidence" value="ECO:0000266"/>
    <property type="project" value="PomBase"/>
</dbReference>
<dbReference type="GO" id="GO:0006906">
    <property type="term" value="P:vesicle fusion"/>
    <property type="evidence" value="ECO:0000266"/>
    <property type="project" value="PomBase"/>
</dbReference>
<dbReference type="CDD" id="cd15761">
    <property type="entry name" value="FYVE1_Vac1p_like"/>
    <property type="match status" value="1"/>
</dbReference>
<dbReference type="Gene3D" id="4.10.860.20">
    <property type="entry name" value="Rabenosyn, Rab binding domain"/>
    <property type="match status" value="1"/>
</dbReference>
<dbReference type="Gene3D" id="3.30.40.10">
    <property type="entry name" value="Zinc/RING finger domain, C3HC4 (zinc finger)"/>
    <property type="match status" value="2"/>
</dbReference>
<dbReference type="InterPro" id="IPR052727">
    <property type="entry name" value="Rab4/Rab5_effector"/>
</dbReference>
<dbReference type="InterPro" id="IPR021565">
    <property type="entry name" value="Rbsn_Rab-bd"/>
</dbReference>
<dbReference type="InterPro" id="IPR036531">
    <property type="entry name" value="Rbsn_Rab-bd_sf"/>
</dbReference>
<dbReference type="InterPro" id="IPR013087">
    <property type="entry name" value="Znf_C2H2_type"/>
</dbReference>
<dbReference type="InterPro" id="IPR000306">
    <property type="entry name" value="Znf_FYVE"/>
</dbReference>
<dbReference type="InterPro" id="IPR017455">
    <property type="entry name" value="Znf_FYVE-rel"/>
</dbReference>
<dbReference type="InterPro" id="IPR011011">
    <property type="entry name" value="Znf_FYVE_PHD"/>
</dbReference>
<dbReference type="InterPro" id="IPR013083">
    <property type="entry name" value="Znf_RING/FYVE/PHD"/>
</dbReference>
<dbReference type="PANTHER" id="PTHR13510">
    <property type="entry name" value="FYVE-FINGER-CONTAINING RAB5 EFFECTOR PROTEIN RABENOSYN-5-RELATED"/>
    <property type="match status" value="1"/>
</dbReference>
<dbReference type="PANTHER" id="PTHR13510:SF44">
    <property type="entry name" value="RABENOSYN-5"/>
    <property type="match status" value="1"/>
</dbReference>
<dbReference type="Pfam" id="PF01363">
    <property type="entry name" value="FYVE"/>
    <property type="match status" value="2"/>
</dbReference>
<dbReference type="Pfam" id="PF11464">
    <property type="entry name" value="Rbsn"/>
    <property type="match status" value="1"/>
</dbReference>
<dbReference type="SMART" id="SM00064">
    <property type="entry name" value="FYVE"/>
    <property type="match status" value="2"/>
</dbReference>
<dbReference type="SUPFAM" id="SSF57903">
    <property type="entry name" value="FYVE/PHD zinc finger"/>
    <property type="match status" value="2"/>
</dbReference>
<dbReference type="SUPFAM" id="SSF140125">
    <property type="entry name" value="Rabenosyn-5 Rab-binding domain-like"/>
    <property type="match status" value="1"/>
</dbReference>
<dbReference type="PROSITE" id="PS50178">
    <property type="entry name" value="ZF_FYVE"/>
    <property type="match status" value="2"/>
</dbReference>
<dbReference type="PROSITE" id="PS00028">
    <property type="entry name" value="ZINC_FINGER_C2H2_1"/>
    <property type="match status" value="1"/>
</dbReference>
<keyword id="KW-0479">Metal-binding</keyword>
<keyword id="KW-1185">Reference proteome</keyword>
<keyword id="KW-0677">Repeat</keyword>
<keyword id="KW-0862">Zinc</keyword>
<keyword id="KW-0863">Zinc-finger</keyword>
<sequence length="536" mass="62434">MQNGKRRIGVRISSNLSNHSGTNLSTSAQSDSSNIVKATECPICGLELPNLSALNDHLDVTHFNDNEKIHKRQDSINSWLTRTLNGASALQMKAAQRLWRMEPYEQNGDSSGAVGLEATKLTDSLVVKNHWQPEVPDMVCHDPMCDKLLNFINGHIHCRKCGYIFCNFHSMYQIKLSIHATYDSENGFWCRVCRECYEGRPGYNDSNGLIRSRFQTFETFRKPLADKRRIEFLRLSKRMKKLEELWTSENVSMLDALLLNKAKRLEQSIVHWQDDSVVQICPECNNSFTLTRRRRHCRLCGRVICRFCVLEISLPQHPQPLLICMSCNQNYFRNVLYQTERSKSLGYIRHIEHLQVFRQAMVNYYRLYEDSLSELLSGEIITEATLKIVKDRRKKFLELCVKYDGTMKKIANHPSSNDAEEQFKQNVVNEAKRYLQETILRLQAIPYHLQVGQAWTSESERELEKKKEQVEKKQEELMQTRIVLEEQVFLVENMIEDAKAKRKFSEVETLLSSLAPLHEEIHSITEKIHDLDLFDI</sequence>
<organism>
    <name type="scientific">Schizosaccharomyces pombe (strain 972 / ATCC 24843)</name>
    <name type="common">Fission yeast</name>
    <dbReference type="NCBI Taxonomy" id="284812"/>
    <lineage>
        <taxon>Eukaryota</taxon>
        <taxon>Fungi</taxon>
        <taxon>Dikarya</taxon>
        <taxon>Ascomycota</taxon>
        <taxon>Taphrinomycotina</taxon>
        <taxon>Schizosaccharomycetes</taxon>
        <taxon>Schizosaccharomycetales</taxon>
        <taxon>Schizosaccharomycetaceae</taxon>
        <taxon>Schizosaccharomyces</taxon>
    </lineage>
</organism>
<proteinExistence type="inferred from homology"/>
<name>PEP7_SCHPO</name>
<feature type="chain" id="PRO_0000046857" description="Vacuolar segregation protein pep7">
    <location>
        <begin position="1"/>
        <end position="536"/>
    </location>
</feature>
<feature type="zinc finger region" description="C2H2-type">
    <location>
        <begin position="39"/>
        <end position="62"/>
    </location>
</feature>
<feature type="zinc finger region" description="FYVE-type 1; degenerate" evidence="2">
    <location>
        <begin position="136"/>
        <end position="201"/>
    </location>
</feature>
<feature type="zinc finger region" description="FYVE-type 2" evidence="2">
    <location>
        <begin position="275"/>
        <end position="332"/>
    </location>
</feature>
<feature type="region of interest" description="Disordered" evidence="3">
    <location>
        <begin position="1"/>
        <end position="31"/>
    </location>
</feature>
<feature type="compositionally biased region" description="Polar residues" evidence="3">
    <location>
        <begin position="12"/>
        <end position="31"/>
    </location>
</feature>
<feature type="binding site" evidence="2">
    <location>
        <position position="158"/>
    </location>
    <ligand>
        <name>Zn(2+)</name>
        <dbReference type="ChEBI" id="CHEBI:29105"/>
        <label>1</label>
    </ligand>
</feature>
<feature type="binding site" evidence="2">
    <location>
        <position position="161"/>
    </location>
    <ligand>
        <name>Zn(2+)</name>
        <dbReference type="ChEBI" id="CHEBI:29105"/>
        <label>1</label>
    </ligand>
</feature>
<feature type="binding site" evidence="2">
    <location>
        <position position="193"/>
    </location>
    <ligand>
        <name>Zn(2+)</name>
        <dbReference type="ChEBI" id="CHEBI:29105"/>
        <label>1</label>
    </ligand>
</feature>
<feature type="binding site" evidence="2">
    <location>
        <position position="196"/>
    </location>
    <ligand>
        <name>Zn(2+)</name>
        <dbReference type="ChEBI" id="CHEBI:29105"/>
        <label>1</label>
    </ligand>
</feature>
<feature type="binding site" evidence="2">
    <location>
        <position position="281"/>
    </location>
    <ligand>
        <name>Zn(2+)</name>
        <dbReference type="ChEBI" id="CHEBI:29105"/>
        <label>2</label>
    </ligand>
</feature>
<feature type="binding site" evidence="2">
    <location>
        <position position="284"/>
    </location>
    <ligand>
        <name>Zn(2+)</name>
        <dbReference type="ChEBI" id="CHEBI:29105"/>
        <label>2</label>
    </ligand>
</feature>
<feature type="binding site" evidence="2">
    <location>
        <position position="297"/>
    </location>
    <ligand>
        <name>Zn(2+)</name>
        <dbReference type="ChEBI" id="CHEBI:29105"/>
        <label>3</label>
    </ligand>
</feature>
<feature type="binding site" evidence="2">
    <location>
        <position position="300"/>
    </location>
    <ligand>
        <name>Zn(2+)</name>
        <dbReference type="ChEBI" id="CHEBI:29105"/>
        <label>3</label>
    </ligand>
</feature>
<feature type="binding site" evidence="2">
    <location>
        <position position="305"/>
    </location>
    <ligand>
        <name>Zn(2+)</name>
        <dbReference type="ChEBI" id="CHEBI:29105"/>
        <label>2</label>
    </ligand>
</feature>
<feature type="binding site" evidence="2">
    <location>
        <position position="308"/>
    </location>
    <ligand>
        <name>Zn(2+)</name>
        <dbReference type="ChEBI" id="CHEBI:29105"/>
        <label>2</label>
    </ligand>
</feature>
<feature type="binding site" evidence="2">
    <location>
        <position position="324"/>
    </location>
    <ligand>
        <name>Zn(2+)</name>
        <dbReference type="ChEBI" id="CHEBI:29105"/>
        <label>3</label>
    </ligand>
</feature>
<feature type="binding site" evidence="2">
    <location>
        <position position="327"/>
    </location>
    <ligand>
        <name>Zn(2+)</name>
        <dbReference type="ChEBI" id="CHEBI:29105"/>
        <label>3</label>
    </ligand>
</feature>
<gene>
    <name type="primary">pep7</name>
    <name type="synonym">vac1</name>
    <name type="ORF">SPAC17G6.08</name>
</gene>
<reference key="1">
    <citation type="journal article" date="2002" name="Nature">
        <title>The genome sequence of Schizosaccharomyces pombe.</title>
        <authorList>
            <person name="Wood V."/>
            <person name="Gwilliam R."/>
            <person name="Rajandream M.A."/>
            <person name="Lyne M.H."/>
            <person name="Lyne R."/>
            <person name="Stewart A."/>
            <person name="Sgouros J.G."/>
            <person name="Peat N."/>
            <person name="Hayles J."/>
            <person name="Baker S.G."/>
            <person name="Basham D."/>
            <person name="Bowman S."/>
            <person name="Brooks K."/>
            <person name="Brown D."/>
            <person name="Brown S."/>
            <person name="Chillingworth T."/>
            <person name="Churcher C.M."/>
            <person name="Collins M."/>
            <person name="Connor R."/>
            <person name="Cronin A."/>
            <person name="Davis P."/>
            <person name="Feltwell T."/>
            <person name="Fraser A."/>
            <person name="Gentles S."/>
            <person name="Goble A."/>
            <person name="Hamlin N."/>
            <person name="Harris D.E."/>
            <person name="Hidalgo J."/>
            <person name="Hodgson G."/>
            <person name="Holroyd S."/>
            <person name="Hornsby T."/>
            <person name="Howarth S."/>
            <person name="Huckle E.J."/>
            <person name="Hunt S."/>
            <person name="Jagels K."/>
            <person name="James K.D."/>
            <person name="Jones L."/>
            <person name="Jones M."/>
            <person name="Leather S."/>
            <person name="McDonald S."/>
            <person name="McLean J."/>
            <person name="Mooney P."/>
            <person name="Moule S."/>
            <person name="Mungall K.L."/>
            <person name="Murphy L.D."/>
            <person name="Niblett D."/>
            <person name="Odell C."/>
            <person name="Oliver K."/>
            <person name="O'Neil S."/>
            <person name="Pearson D."/>
            <person name="Quail M.A."/>
            <person name="Rabbinowitsch E."/>
            <person name="Rutherford K.M."/>
            <person name="Rutter S."/>
            <person name="Saunders D."/>
            <person name="Seeger K."/>
            <person name="Sharp S."/>
            <person name="Skelton J."/>
            <person name="Simmonds M.N."/>
            <person name="Squares R."/>
            <person name="Squares S."/>
            <person name="Stevens K."/>
            <person name="Taylor K."/>
            <person name="Taylor R.G."/>
            <person name="Tivey A."/>
            <person name="Walsh S.V."/>
            <person name="Warren T."/>
            <person name="Whitehead S."/>
            <person name="Woodward J.R."/>
            <person name="Volckaert G."/>
            <person name="Aert R."/>
            <person name="Robben J."/>
            <person name="Grymonprez B."/>
            <person name="Weltjens I."/>
            <person name="Vanstreels E."/>
            <person name="Rieger M."/>
            <person name="Schaefer M."/>
            <person name="Mueller-Auer S."/>
            <person name="Gabel C."/>
            <person name="Fuchs M."/>
            <person name="Duesterhoeft A."/>
            <person name="Fritzc C."/>
            <person name="Holzer E."/>
            <person name="Moestl D."/>
            <person name="Hilbert H."/>
            <person name="Borzym K."/>
            <person name="Langer I."/>
            <person name="Beck A."/>
            <person name="Lehrach H."/>
            <person name="Reinhardt R."/>
            <person name="Pohl T.M."/>
            <person name="Eger P."/>
            <person name="Zimmermann W."/>
            <person name="Wedler H."/>
            <person name="Wambutt R."/>
            <person name="Purnelle B."/>
            <person name="Goffeau A."/>
            <person name="Cadieu E."/>
            <person name="Dreano S."/>
            <person name="Gloux S."/>
            <person name="Lelaure V."/>
            <person name="Mottier S."/>
            <person name="Galibert F."/>
            <person name="Aves S.J."/>
            <person name="Xiang Z."/>
            <person name="Hunt C."/>
            <person name="Moore K."/>
            <person name="Hurst S.M."/>
            <person name="Lucas M."/>
            <person name="Rochet M."/>
            <person name="Gaillardin C."/>
            <person name="Tallada V.A."/>
            <person name="Garzon A."/>
            <person name="Thode G."/>
            <person name="Daga R.R."/>
            <person name="Cruzado L."/>
            <person name="Jimenez J."/>
            <person name="Sanchez M."/>
            <person name="del Rey F."/>
            <person name="Benito J."/>
            <person name="Dominguez A."/>
            <person name="Revuelta J.L."/>
            <person name="Moreno S."/>
            <person name="Armstrong J."/>
            <person name="Forsburg S.L."/>
            <person name="Cerutti L."/>
            <person name="Lowe T."/>
            <person name="McCombie W.R."/>
            <person name="Paulsen I."/>
            <person name="Potashkin J."/>
            <person name="Shpakovski G.V."/>
            <person name="Ussery D."/>
            <person name="Barrell B.G."/>
            <person name="Nurse P."/>
        </authorList>
    </citation>
    <scope>NUCLEOTIDE SEQUENCE [LARGE SCALE GENOMIC DNA]</scope>
    <source>
        <strain>972 / ATCC 24843</strain>
    </source>
</reference>
<comment type="function">
    <text evidence="1">Required for vacuole segregation and vacuole protein sorting. Possibly part of a complex which tethers the vacuole membrane to microtubules, either directly or via kinesin or dynein-like motor proteins. Probably functions in several interorganelle traffic pathways (By similarity).</text>
</comment>
<evidence type="ECO:0000250" key="1"/>
<evidence type="ECO:0000255" key="2">
    <source>
        <dbReference type="PROSITE-ProRule" id="PRU00091"/>
    </source>
</evidence>
<evidence type="ECO:0000256" key="3">
    <source>
        <dbReference type="SAM" id="MobiDB-lite"/>
    </source>
</evidence>